<gene>
    <name evidence="1" type="primary">menD</name>
    <name type="ordered locus">SCH_2309</name>
</gene>
<evidence type="ECO:0000255" key="1">
    <source>
        <dbReference type="HAMAP-Rule" id="MF_01659"/>
    </source>
</evidence>
<sequence length="556" mass="61493">MSVSAFNRRWAAVILEALTRHGVRHVCIAPGSRSTPLTLAAAENPAFIHHTHFDERGLGHLALGLAKVSQQPVAVIVTSGTAVANLYPALIEAGLTGEKLILLTADRPPELIDCGANQAIRQAGMFASHPSQTLSLPRPTQDIPARWLVSTIDNALAMLHAGALHINCPFAEPLYGDMNDTGLVWQQRLGDWWQDEKPWLREARRLESDKQRDWFFWRQKRGVVVAGRMSAEEGKKVAQWAQTLGWPLIGDVLSQTGQPLPCADLWLGNAKAVTELQQAQIVVQLGSSLTGKRLLQWQATCEPEEYWVIDNIEGRLDPAHHRGRRLVAKIADWLELHPAEKRKPWCVEIPRLAELAWQRVVAQRDTFGEAQLAHRIRDYLPEQGQLFVGNSLVVRLIDALSQLPAGYPVYSNRGASGIDGLLSTAAGVQRASAKSTLAIVGDLSALYDLNALALLRQVSAPFVLIVVNNNGGQIFSLLPTPQSKRERFYLMPQNVHFDHAAAMFNLRYHRPENWEELESALAGAWRTPAATVIELVVNDTDGAQTLQQLLAQVSHL</sequence>
<accession>Q57M47</accession>
<reference key="1">
    <citation type="journal article" date="2005" name="Nucleic Acids Res.">
        <title>The genome sequence of Salmonella enterica serovar Choleraesuis, a highly invasive and resistant zoonotic pathogen.</title>
        <authorList>
            <person name="Chiu C.-H."/>
            <person name="Tang P."/>
            <person name="Chu C."/>
            <person name="Hu S."/>
            <person name="Bao Q."/>
            <person name="Yu J."/>
            <person name="Chou Y.-Y."/>
            <person name="Wang H.-S."/>
            <person name="Lee Y.-S."/>
        </authorList>
    </citation>
    <scope>NUCLEOTIDE SEQUENCE [LARGE SCALE GENOMIC DNA]</scope>
    <source>
        <strain>SC-B67</strain>
    </source>
</reference>
<name>MEND_SALCH</name>
<keyword id="KW-0460">Magnesium</keyword>
<keyword id="KW-0464">Manganese</keyword>
<keyword id="KW-0474">Menaquinone biosynthesis</keyword>
<keyword id="KW-0479">Metal-binding</keyword>
<keyword id="KW-0786">Thiamine pyrophosphate</keyword>
<keyword id="KW-0808">Transferase</keyword>
<dbReference type="EC" id="2.2.1.9" evidence="1"/>
<dbReference type="EMBL" id="AE017220">
    <property type="protein sequence ID" value="AAX66215.1"/>
    <property type="molecule type" value="Genomic_DNA"/>
</dbReference>
<dbReference type="RefSeq" id="WP_000116391.1">
    <property type="nucleotide sequence ID" value="NC_006905.1"/>
</dbReference>
<dbReference type="SMR" id="Q57M47"/>
<dbReference type="KEGG" id="sec:SCH_2309"/>
<dbReference type="HOGENOM" id="CLU_006051_3_0_6"/>
<dbReference type="UniPathway" id="UPA00079"/>
<dbReference type="UniPathway" id="UPA01057">
    <property type="reaction ID" value="UER00164"/>
</dbReference>
<dbReference type="Proteomes" id="UP000000538">
    <property type="component" value="Chromosome"/>
</dbReference>
<dbReference type="GO" id="GO:0070204">
    <property type="term" value="F:2-succinyl-5-enolpyruvyl-6-hydroxy-3-cyclohexene-1-carboxylic-acid synthase activity"/>
    <property type="evidence" value="ECO:0007669"/>
    <property type="project" value="UniProtKB-UniRule"/>
</dbReference>
<dbReference type="GO" id="GO:0000287">
    <property type="term" value="F:magnesium ion binding"/>
    <property type="evidence" value="ECO:0007669"/>
    <property type="project" value="UniProtKB-UniRule"/>
</dbReference>
<dbReference type="GO" id="GO:0030145">
    <property type="term" value="F:manganese ion binding"/>
    <property type="evidence" value="ECO:0007669"/>
    <property type="project" value="UniProtKB-UniRule"/>
</dbReference>
<dbReference type="GO" id="GO:0030976">
    <property type="term" value="F:thiamine pyrophosphate binding"/>
    <property type="evidence" value="ECO:0007669"/>
    <property type="project" value="UniProtKB-UniRule"/>
</dbReference>
<dbReference type="GO" id="GO:0009234">
    <property type="term" value="P:menaquinone biosynthetic process"/>
    <property type="evidence" value="ECO:0007669"/>
    <property type="project" value="UniProtKB-UniRule"/>
</dbReference>
<dbReference type="CDD" id="cd07037">
    <property type="entry name" value="TPP_PYR_MenD"/>
    <property type="match status" value="1"/>
</dbReference>
<dbReference type="CDD" id="cd02009">
    <property type="entry name" value="TPP_SHCHC_synthase"/>
    <property type="match status" value="1"/>
</dbReference>
<dbReference type="FunFam" id="3.40.50.1220:FF:000010">
    <property type="entry name" value="2-succinyl-5-enolpyruvyl-6-hydroxy-3-cyclohexene-1-carboxylate synthase"/>
    <property type="match status" value="1"/>
</dbReference>
<dbReference type="FunFam" id="3.40.50.970:FF:000029">
    <property type="entry name" value="2-succinyl-5-enolpyruvyl-6-hydroxy-3-cyclohexene-1-carboxylate synthase"/>
    <property type="match status" value="1"/>
</dbReference>
<dbReference type="Gene3D" id="3.40.50.970">
    <property type="match status" value="2"/>
</dbReference>
<dbReference type="Gene3D" id="3.40.50.1220">
    <property type="entry name" value="TPP-binding domain"/>
    <property type="match status" value="1"/>
</dbReference>
<dbReference type="HAMAP" id="MF_01659">
    <property type="entry name" value="MenD"/>
    <property type="match status" value="1"/>
</dbReference>
<dbReference type="InterPro" id="IPR004433">
    <property type="entry name" value="MenaQ_synth_MenD"/>
</dbReference>
<dbReference type="InterPro" id="IPR032264">
    <property type="entry name" value="MenD_middle"/>
</dbReference>
<dbReference type="InterPro" id="IPR029061">
    <property type="entry name" value="THDP-binding"/>
</dbReference>
<dbReference type="InterPro" id="IPR012001">
    <property type="entry name" value="Thiamin_PyroP_enz_TPP-bd_dom"/>
</dbReference>
<dbReference type="InterPro" id="IPR011766">
    <property type="entry name" value="TPP_enzyme_TPP-bd"/>
</dbReference>
<dbReference type="NCBIfam" id="TIGR00173">
    <property type="entry name" value="menD"/>
    <property type="match status" value="1"/>
</dbReference>
<dbReference type="PANTHER" id="PTHR42916">
    <property type="entry name" value="2-SUCCINYL-5-ENOLPYRUVYL-6-HYDROXY-3-CYCLOHEXENE-1-CARBOXYLATE SYNTHASE"/>
    <property type="match status" value="1"/>
</dbReference>
<dbReference type="PANTHER" id="PTHR42916:SF1">
    <property type="entry name" value="PROTEIN PHYLLO, CHLOROPLASTIC"/>
    <property type="match status" value="1"/>
</dbReference>
<dbReference type="Pfam" id="PF02775">
    <property type="entry name" value="TPP_enzyme_C"/>
    <property type="match status" value="1"/>
</dbReference>
<dbReference type="Pfam" id="PF16582">
    <property type="entry name" value="TPP_enzyme_M_2"/>
    <property type="match status" value="1"/>
</dbReference>
<dbReference type="Pfam" id="PF02776">
    <property type="entry name" value="TPP_enzyme_N"/>
    <property type="match status" value="1"/>
</dbReference>
<dbReference type="PIRSF" id="PIRSF004983">
    <property type="entry name" value="MenD"/>
    <property type="match status" value="1"/>
</dbReference>
<dbReference type="SUPFAM" id="SSF52518">
    <property type="entry name" value="Thiamin diphosphate-binding fold (THDP-binding)"/>
    <property type="match status" value="2"/>
</dbReference>
<feature type="chain" id="PRO_0000341821" description="2-succinyl-5-enolpyruvyl-6-hydroxy-3-cyclohexene-1-carboxylate synthase">
    <location>
        <begin position="1"/>
        <end position="556"/>
    </location>
</feature>
<protein>
    <recommendedName>
        <fullName evidence="1">2-succinyl-5-enolpyruvyl-6-hydroxy-3-cyclohexene-1-carboxylate synthase</fullName>
        <shortName evidence="1">SEPHCHC synthase</shortName>
        <ecNumber evidence="1">2.2.1.9</ecNumber>
    </recommendedName>
    <alternativeName>
        <fullName evidence="1">Menaquinone biosynthesis protein MenD</fullName>
    </alternativeName>
</protein>
<organism>
    <name type="scientific">Salmonella choleraesuis (strain SC-B67)</name>
    <dbReference type="NCBI Taxonomy" id="321314"/>
    <lineage>
        <taxon>Bacteria</taxon>
        <taxon>Pseudomonadati</taxon>
        <taxon>Pseudomonadota</taxon>
        <taxon>Gammaproteobacteria</taxon>
        <taxon>Enterobacterales</taxon>
        <taxon>Enterobacteriaceae</taxon>
        <taxon>Salmonella</taxon>
    </lineage>
</organism>
<comment type="function">
    <text evidence="1">Catalyzes the thiamine diphosphate-dependent decarboxylation of 2-oxoglutarate and the subsequent addition of the resulting succinic semialdehyde-thiamine pyrophosphate anion to isochorismate to yield 2-succinyl-5-enolpyruvyl-6-hydroxy-3-cyclohexene-1-carboxylate (SEPHCHC).</text>
</comment>
<comment type="catalytic activity">
    <reaction evidence="1">
        <text>isochorismate + 2-oxoglutarate + H(+) = 5-enolpyruvoyl-6-hydroxy-2-succinyl-cyclohex-3-ene-1-carboxylate + CO2</text>
        <dbReference type="Rhea" id="RHEA:25593"/>
        <dbReference type="ChEBI" id="CHEBI:15378"/>
        <dbReference type="ChEBI" id="CHEBI:16526"/>
        <dbReference type="ChEBI" id="CHEBI:16810"/>
        <dbReference type="ChEBI" id="CHEBI:29780"/>
        <dbReference type="ChEBI" id="CHEBI:58818"/>
        <dbReference type="EC" id="2.2.1.9"/>
    </reaction>
</comment>
<comment type="cofactor">
    <cofactor evidence="1">
        <name>Mg(2+)</name>
        <dbReference type="ChEBI" id="CHEBI:18420"/>
    </cofactor>
    <cofactor evidence="1">
        <name>Mn(2+)</name>
        <dbReference type="ChEBI" id="CHEBI:29035"/>
    </cofactor>
</comment>
<comment type="cofactor">
    <cofactor evidence="1">
        <name>thiamine diphosphate</name>
        <dbReference type="ChEBI" id="CHEBI:58937"/>
    </cofactor>
    <text evidence="1">Binds 1 thiamine pyrophosphate per subunit.</text>
</comment>
<comment type="pathway">
    <text evidence="1">Quinol/quinone metabolism; 1,4-dihydroxy-2-naphthoate biosynthesis; 1,4-dihydroxy-2-naphthoate from chorismate: step 2/7.</text>
</comment>
<comment type="pathway">
    <text evidence="1">Quinol/quinone metabolism; menaquinone biosynthesis.</text>
</comment>
<comment type="subunit">
    <text evidence="1">Homodimer.</text>
</comment>
<comment type="similarity">
    <text evidence="1">Belongs to the TPP enzyme family. MenD subfamily.</text>
</comment>
<proteinExistence type="inferred from homology"/>